<protein>
    <recommendedName>
        <fullName evidence="1">Large ribosomal subunit protein uL18</fullName>
    </recommendedName>
    <alternativeName>
        <fullName evidence="2">50S ribosomal protein L18</fullName>
    </alternativeName>
</protein>
<proteinExistence type="inferred from homology"/>
<organism>
    <name type="scientific">Escherichia coli O139:H28 (strain E24377A / ETEC)</name>
    <dbReference type="NCBI Taxonomy" id="331111"/>
    <lineage>
        <taxon>Bacteria</taxon>
        <taxon>Pseudomonadati</taxon>
        <taxon>Pseudomonadota</taxon>
        <taxon>Gammaproteobacteria</taxon>
        <taxon>Enterobacterales</taxon>
        <taxon>Enterobacteriaceae</taxon>
        <taxon>Escherichia</taxon>
    </lineage>
</organism>
<evidence type="ECO:0000255" key="1">
    <source>
        <dbReference type="HAMAP-Rule" id="MF_01337"/>
    </source>
</evidence>
<evidence type="ECO:0000305" key="2"/>
<name>RL18_ECO24</name>
<gene>
    <name evidence="1" type="primary">rplR</name>
    <name type="ordered locus">EcE24377A_3787</name>
</gene>
<dbReference type="EMBL" id="CP000800">
    <property type="protein sequence ID" value="ABV20644.1"/>
    <property type="molecule type" value="Genomic_DNA"/>
</dbReference>
<dbReference type="RefSeq" id="WP_000358960.1">
    <property type="nucleotide sequence ID" value="NC_009801.1"/>
</dbReference>
<dbReference type="SMR" id="A7ZSJ3"/>
<dbReference type="GeneID" id="98390426"/>
<dbReference type="KEGG" id="ecw:EcE24377A_3787"/>
<dbReference type="HOGENOM" id="CLU_098841_0_1_6"/>
<dbReference type="Proteomes" id="UP000001122">
    <property type="component" value="Chromosome"/>
</dbReference>
<dbReference type="GO" id="GO:0022625">
    <property type="term" value="C:cytosolic large ribosomal subunit"/>
    <property type="evidence" value="ECO:0007669"/>
    <property type="project" value="TreeGrafter"/>
</dbReference>
<dbReference type="GO" id="GO:0008097">
    <property type="term" value="F:5S rRNA binding"/>
    <property type="evidence" value="ECO:0007669"/>
    <property type="project" value="TreeGrafter"/>
</dbReference>
<dbReference type="GO" id="GO:0003735">
    <property type="term" value="F:structural constituent of ribosome"/>
    <property type="evidence" value="ECO:0007669"/>
    <property type="project" value="InterPro"/>
</dbReference>
<dbReference type="GO" id="GO:0006412">
    <property type="term" value="P:translation"/>
    <property type="evidence" value="ECO:0007669"/>
    <property type="project" value="UniProtKB-UniRule"/>
</dbReference>
<dbReference type="CDD" id="cd00432">
    <property type="entry name" value="Ribosomal_L18_L5e"/>
    <property type="match status" value="1"/>
</dbReference>
<dbReference type="FunFam" id="3.30.420.100:FF:000001">
    <property type="entry name" value="50S ribosomal protein L18"/>
    <property type="match status" value="1"/>
</dbReference>
<dbReference type="Gene3D" id="3.30.420.100">
    <property type="match status" value="1"/>
</dbReference>
<dbReference type="HAMAP" id="MF_01337_B">
    <property type="entry name" value="Ribosomal_uL18_B"/>
    <property type="match status" value="1"/>
</dbReference>
<dbReference type="InterPro" id="IPR004389">
    <property type="entry name" value="Ribosomal_uL18_bac-type"/>
</dbReference>
<dbReference type="InterPro" id="IPR005484">
    <property type="entry name" value="Ribosomal_uL18_bac/euk"/>
</dbReference>
<dbReference type="NCBIfam" id="TIGR00060">
    <property type="entry name" value="L18_bact"/>
    <property type="match status" value="1"/>
</dbReference>
<dbReference type="PANTHER" id="PTHR12899">
    <property type="entry name" value="39S RIBOSOMAL PROTEIN L18, MITOCHONDRIAL"/>
    <property type="match status" value="1"/>
</dbReference>
<dbReference type="PANTHER" id="PTHR12899:SF3">
    <property type="entry name" value="LARGE RIBOSOMAL SUBUNIT PROTEIN UL18M"/>
    <property type="match status" value="1"/>
</dbReference>
<dbReference type="Pfam" id="PF00861">
    <property type="entry name" value="Ribosomal_L18p"/>
    <property type="match status" value="1"/>
</dbReference>
<dbReference type="SUPFAM" id="SSF53137">
    <property type="entry name" value="Translational machinery components"/>
    <property type="match status" value="1"/>
</dbReference>
<feature type="chain" id="PRO_1000067638" description="Large ribosomal subunit protein uL18">
    <location>
        <begin position="1"/>
        <end position="117"/>
    </location>
</feature>
<sequence>MDKKSARIRRATRARRKLQELGATRLVVHRTPRHIYAQVIAPNGSEVLVAASTVEKAIAEQLKYTGNKDAAAAVGKAVAERALEKGIKDVSFDRSGFQYHGRVQALADAAREAGLQF</sequence>
<keyword id="KW-1185">Reference proteome</keyword>
<keyword id="KW-0687">Ribonucleoprotein</keyword>
<keyword id="KW-0689">Ribosomal protein</keyword>
<keyword id="KW-0694">RNA-binding</keyword>
<keyword id="KW-0699">rRNA-binding</keyword>
<comment type="function">
    <text evidence="1">This is one of the proteins that bind and probably mediate the attachment of the 5S RNA into the large ribosomal subunit, where it forms part of the central protuberance.</text>
</comment>
<comment type="subunit">
    <text evidence="1">Part of the 50S ribosomal subunit; part of the 5S rRNA/L5/L18/L25 subcomplex. Contacts the 5S and 23S rRNAs.</text>
</comment>
<comment type="similarity">
    <text evidence="1">Belongs to the universal ribosomal protein uL18 family.</text>
</comment>
<accession>A7ZSJ3</accession>
<reference key="1">
    <citation type="journal article" date="2008" name="J. Bacteriol.">
        <title>The pangenome structure of Escherichia coli: comparative genomic analysis of E. coli commensal and pathogenic isolates.</title>
        <authorList>
            <person name="Rasko D.A."/>
            <person name="Rosovitz M.J."/>
            <person name="Myers G.S.A."/>
            <person name="Mongodin E.F."/>
            <person name="Fricke W.F."/>
            <person name="Gajer P."/>
            <person name="Crabtree J."/>
            <person name="Sebaihia M."/>
            <person name="Thomson N.R."/>
            <person name="Chaudhuri R."/>
            <person name="Henderson I.R."/>
            <person name="Sperandio V."/>
            <person name="Ravel J."/>
        </authorList>
    </citation>
    <scope>NUCLEOTIDE SEQUENCE [LARGE SCALE GENOMIC DNA]</scope>
    <source>
        <strain>E24377A / ETEC</strain>
    </source>
</reference>